<evidence type="ECO:0000255" key="1">
    <source>
        <dbReference type="HAMAP-Rule" id="MF_04015"/>
    </source>
</evidence>
<organismHost>
    <name type="scientific">Gallus gallus</name>
    <name type="common">Chicken</name>
    <dbReference type="NCBI Taxonomy" id="9031"/>
</organismHost>
<keyword id="KW-1048">Host nucleus</keyword>
<keyword id="KW-1185">Reference proteome</keyword>
<keyword id="KW-0231">Viral genome packaging</keyword>
<keyword id="KW-1188">Viral release from host cell</keyword>
<proteinExistence type="inferred from homology"/>
<dbReference type="EMBL" id="AF243438">
    <property type="protein sequence ID" value="AAG14225.1"/>
    <property type="molecule type" value="Genomic_DNA"/>
</dbReference>
<dbReference type="RefSeq" id="YP_001033962.1">
    <property type="nucleotide sequence ID" value="NC_002229.3"/>
</dbReference>
<dbReference type="SMR" id="Q9E6N6"/>
<dbReference type="GeneID" id="4811508"/>
<dbReference type="KEGG" id="vg:4811508"/>
<dbReference type="Proteomes" id="UP000008072">
    <property type="component" value="Segment"/>
</dbReference>
<dbReference type="GO" id="GO:0042025">
    <property type="term" value="C:host cell nucleus"/>
    <property type="evidence" value="ECO:0007669"/>
    <property type="project" value="UniProtKB-SubCell"/>
</dbReference>
<dbReference type="GO" id="GO:0019073">
    <property type="term" value="P:viral DNA genome packaging"/>
    <property type="evidence" value="ECO:0007669"/>
    <property type="project" value="InterPro"/>
</dbReference>
<dbReference type="HAMAP" id="MF_04015">
    <property type="entry name" value="HSV_TRM2"/>
    <property type="match status" value="1"/>
</dbReference>
<dbReference type="InterPro" id="IPR005208">
    <property type="entry name" value="Herpes_TT2"/>
</dbReference>
<dbReference type="Pfam" id="PF03581">
    <property type="entry name" value="Herpes_UL33"/>
    <property type="match status" value="1"/>
</dbReference>
<reference key="1">
    <citation type="journal article" date="2000" name="J. Virol.">
        <title>The genome of a very virulent Marek's disease virus.</title>
        <authorList>
            <person name="Tulman E.R."/>
            <person name="Afonso C.L."/>
            <person name="Lu Z."/>
            <person name="Zsak L."/>
            <person name="Rock D.L."/>
            <person name="Kutish G.F."/>
        </authorList>
    </citation>
    <scope>NUCLEOTIDE SEQUENCE [LARGE SCALE GENOMIC DNA]</scope>
</reference>
<feature type="chain" id="PRO_0000406547" description="Tripartite terminase subunit 2">
    <location>
        <begin position="1"/>
        <end position="134"/>
    </location>
</feature>
<organism>
    <name type="scientific">Gallid herpesvirus 2 (strain Chicken/Md5/ATCC VR-987)</name>
    <name type="common">GaHV-2</name>
    <name type="synonym">Marek's disease herpesvirus type 1</name>
    <dbReference type="NCBI Taxonomy" id="10389"/>
    <lineage>
        <taxon>Viruses</taxon>
        <taxon>Duplodnaviria</taxon>
        <taxon>Heunggongvirae</taxon>
        <taxon>Peploviricota</taxon>
        <taxon>Herviviricetes</taxon>
        <taxon>Herpesvirales</taxon>
        <taxon>Orthoherpesviridae</taxon>
        <taxon>Alphaherpesvirinae</taxon>
        <taxon>Mardivirus</taxon>
        <taxon>Mardivirus gallidalpha2</taxon>
        <taxon>Gallid alphaherpesvirus 2</taxon>
    </lineage>
</organism>
<gene>
    <name evidence="1" type="primary">TRM2</name>
    <name type="ordered locus">MDV045</name>
</gene>
<protein>
    <recommendedName>
        <fullName evidence="1">Tripartite terminase subunit 2</fullName>
    </recommendedName>
</protein>
<sequence>MAGENTSRRTGSARLDEVIPEFELVSTDVKILAEKYLQDERIYRIWFEYLIPDEIDLIFPTTDGKLNYLSFTKRLASAIRYGRIKTAVSNNSSSNSYGSTEHVCDHGTSLCGRSERFASVINRFLDLHQILKDC</sequence>
<name>TRM2_GAHVM</name>
<accession>Q9E6N6</accession>
<comment type="function">
    <text evidence="1">Component of the molecular motor that translocates viral genomic DNA in empty capsid during DNA packaging. Forms a tripartite terminase complex together with TRM1 and TRM3 in the host cytoplasm. Once the complex reaches the host nucleus, it interacts with the capsid portal vertex. This portal forms a ring in which genomic DNA is translocated into the capsid.</text>
</comment>
<comment type="subunit">
    <text evidence="1">Associates with TRM1 and TRM3 to form the tripartite terminase complex.</text>
</comment>
<comment type="subcellular location">
    <subcellularLocation>
        <location evidence="1">Host nucleus</location>
    </subcellularLocation>
    <text evidence="1">Found associated with the external surface of the viral capsid during assembly and DNA packaging, but seems absent in extracellular mature virions.</text>
</comment>
<comment type="similarity">
    <text evidence="1">Belongs to the herpesviridae TRM2 protein family.</text>
</comment>